<keyword id="KW-0067">ATP-binding</keyword>
<keyword id="KW-0315">Glutamine amidotransferase</keyword>
<keyword id="KW-0332">GMP biosynthesis</keyword>
<keyword id="KW-0436">Ligase</keyword>
<keyword id="KW-0547">Nucleotide-binding</keyword>
<keyword id="KW-0658">Purine biosynthesis</keyword>
<accession>B9DYY7</accession>
<protein>
    <recommendedName>
        <fullName evidence="1">GMP synthase [glutamine-hydrolyzing]</fullName>
        <ecNumber evidence="1">6.3.5.2</ecNumber>
    </recommendedName>
    <alternativeName>
        <fullName evidence="1">GMP synthetase</fullName>
    </alternativeName>
    <alternativeName>
        <fullName evidence="1">Glutamine amidotransferase</fullName>
    </alternativeName>
</protein>
<organism>
    <name type="scientific">Clostridium kluyveri (strain NBRC 12016)</name>
    <dbReference type="NCBI Taxonomy" id="583346"/>
    <lineage>
        <taxon>Bacteria</taxon>
        <taxon>Bacillati</taxon>
        <taxon>Bacillota</taxon>
        <taxon>Clostridia</taxon>
        <taxon>Eubacteriales</taxon>
        <taxon>Clostridiaceae</taxon>
        <taxon>Clostridium</taxon>
    </lineage>
</organism>
<sequence length="510" mass="57377">MERELVIVVDFGGQYNQLIARRVRENNVYCEIVPYTYSVDKIKEKNPRGIIFTGGPNSVYDDNAPKISEDIFEIGVPVLGICYGHQLICTTLGGKVESAQVREYGKTDVVLNNSSGLFSGIDKNESCWMSHTDFVSYPPEGFKIIGKSGESPVAAVENIDKKIYGVQFHPEVEHTPFGKKMLSNFLFDICNLKGDWSMSSFVDEKIKSIKEEVGDKKVICAMSGGVDSSVAAMIVHKAVGKQLTCIFVDHGLLRKDEGDQVEDIFKKQFNMNFIRVNAEKRFLQKLKDISDPEKKRKIIGEEFIRVFEEEAKKLGEIAFLVQGTIYPDVVESGLGTSATIKSHHNVGGLPEDMDFKLIEPLRELFKDEVRAVGEELGIPHKLVWRQPFPGPGLAIRVLGNITEEKLQITRDADAIFREEIAKANLDETIWQYFACLPNIRSVGVMGDERTYCYTIALRAVISTDAMTSDWARIPYEVLDKVSRRIVNEVKGVNRIVYDITSKPPATIEWE</sequence>
<feature type="chain" id="PRO_1000190234" description="GMP synthase [glutamine-hydrolyzing]">
    <location>
        <begin position="1"/>
        <end position="510"/>
    </location>
</feature>
<feature type="domain" description="Glutamine amidotransferase type-1" evidence="1">
    <location>
        <begin position="5"/>
        <end position="195"/>
    </location>
</feature>
<feature type="domain" description="GMPS ATP-PPase" evidence="1">
    <location>
        <begin position="196"/>
        <end position="385"/>
    </location>
</feature>
<feature type="active site" description="Nucleophile" evidence="1">
    <location>
        <position position="82"/>
    </location>
</feature>
<feature type="active site" evidence="1">
    <location>
        <position position="169"/>
    </location>
</feature>
<feature type="active site" evidence="1">
    <location>
        <position position="171"/>
    </location>
</feature>
<feature type="binding site" evidence="1">
    <location>
        <begin position="223"/>
        <end position="229"/>
    </location>
    <ligand>
        <name>ATP</name>
        <dbReference type="ChEBI" id="CHEBI:30616"/>
    </ligand>
</feature>
<evidence type="ECO:0000255" key="1">
    <source>
        <dbReference type="HAMAP-Rule" id="MF_00344"/>
    </source>
</evidence>
<proteinExistence type="inferred from homology"/>
<name>GUAA_CLOK1</name>
<dbReference type="EC" id="6.3.5.2" evidence="1"/>
<dbReference type="EMBL" id="AP009049">
    <property type="protein sequence ID" value="BAH05462.1"/>
    <property type="molecule type" value="Genomic_DNA"/>
</dbReference>
<dbReference type="RefSeq" id="WP_011989035.1">
    <property type="nucleotide sequence ID" value="NC_011837.1"/>
</dbReference>
<dbReference type="SMR" id="B9DYY7"/>
<dbReference type="MEROPS" id="C26.A21"/>
<dbReference type="KEGG" id="ckr:CKR_0411"/>
<dbReference type="HOGENOM" id="CLU_014340_0_5_9"/>
<dbReference type="UniPathway" id="UPA00189">
    <property type="reaction ID" value="UER00296"/>
</dbReference>
<dbReference type="Proteomes" id="UP000007969">
    <property type="component" value="Chromosome"/>
</dbReference>
<dbReference type="GO" id="GO:0005829">
    <property type="term" value="C:cytosol"/>
    <property type="evidence" value="ECO:0007669"/>
    <property type="project" value="TreeGrafter"/>
</dbReference>
<dbReference type="GO" id="GO:0005524">
    <property type="term" value="F:ATP binding"/>
    <property type="evidence" value="ECO:0007669"/>
    <property type="project" value="UniProtKB-UniRule"/>
</dbReference>
<dbReference type="GO" id="GO:0003921">
    <property type="term" value="F:GMP synthase activity"/>
    <property type="evidence" value="ECO:0007669"/>
    <property type="project" value="InterPro"/>
</dbReference>
<dbReference type="CDD" id="cd01742">
    <property type="entry name" value="GATase1_GMP_Synthase"/>
    <property type="match status" value="1"/>
</dbReference>
<dbReference type="CDD" id="cd01997">
    <property type="entry name" value="GMP_synthase_C"/>
    <property type="match status" value="1"/>
</dbReference>
<dbReference type="FunFam" id="3.30.300.10:FF:000002">
    <property type="entry name" value="GMP synthase [glutamine-hydrolyzing]"/>
    <property type="match status" value="1"/>
</dbReference>
<dbReference type="FunFam" id="3.40.50.620:FF:000001">
    <property type="entry name" value="GMP synthase [glutamine-hydrolyzing]"/>
    <property type="match status" value="1"/>
</dbReference>
<dbReference type="FunFam" id="3.40.50.880:FF:000001">
    <property type="entry name" value="GMP synthase [glutamine-hydrolyzing]"/>
    <property type="match status" value="1"/>
</dbReference>
<dbReference type="Gene3D" id="3.30.300.10">
    <property type="match status" value="1"/>
</dbReference>
<dbReference type="Gene3D" id="3.40.50.880">
    <property type="match status" value="1"/>
</dbReference>
<dbReference type="Gene3D" id="3.40.50.620">
    <property type="entry name" value="HUPs"/>
    <property type="match status" value="1"/>
</dbReference>
<dbReference type="HAMAP" id="MF_00344">
    <property type="entry name" value="GMP_synthase"/>
    <property type="match status" value="1"/>
</dbReference>
<dbReference type="InterPro" id="IPR029062">
    <property type="entry name" value="Class_I_gatase-like"/>
</dbReference>
<dbReference type="InterPro" id="IPR017926">
    <property type="entry name" value="GATASE"/>
</dbReference>
<dbReference type="InterPro" id="IPR001674">
    <property type="entry name" value="GMP_synth_C"/>
</dbReference>
<dbReference type="InterPro" id="IPR004739">
    <property type="entry name" value="GMP_synth_GATase"/>
</dbReference>
<dbReference type="InterPro" id="IPR022955">
    <property type="entry name" value="GMP_synthase"/>
</dbReference>
<dbReference type="InterPro" id="IPR025777">
    <property type="entry name" value="GMPS_ATP_PPase_dom"/>
</dbReference>
<dbReference type="InterPro" id="IPR014729">
    <property type="entry name" value="Rossmann-like_a/b/a_fold"/>
</dbReference>
<dbReference type="NCBIfam" id="TIGR00884">
    <property type="entry name" value="guaA_Cterm"/>
    <property type="match status" value="1"/>
</dbReference>
<dbReference type="NCBIfam" id="TIGR00888">
    <property type="entry name" value="guaA_Nterm"/>
    <property type="match status" value="1"/>
</dbReference>
<dbReference type="NCBIfam" id="NF000848">
    <property type="entry name" value="PRK00074.1"/>
    <property type="match status" value="1"/>
</dbReference>
<dbReference type="PANTHER" id="PTHR11922:SF2">
    <property type="entry name" value="GMP SYNTHASE [GLUTAMINE-HYDROLYZING]"/>
    <property type="match status" value="1"/>
</dbReference>
<dbReference type="PANTHER" id="PTHR11922">
    <property type="entry name" value="GMP SYNTHASE-RELATED"/>
    <property type="match status" value="1"/>
</dbReference>
<dbReference type="Pfam" id="PF00117">
    <property type="entry name" value="GATase"/>
    <property type="match status" value="1"/>
</dbReference>
<dbReference type="Pfam" id="PF00958">
    <property type="entry name" value="GMP_synt_C"/>
    <property type="match status" value="1"/>
</dbReference>
<dbReference type="Pfam" id="PF03054">
    <property type="entry name" value="tRNA_Me_trans"/>
    <property type="match status" value="1"/>
</dbReference>
<dbReference type="PRINTS" id="PR00097">
    <property type="entry name" value="ANTSNTHASEII"/>
</dbReference>
<dbReference type="PRINTS" id="PR00099">
    <property type="entry name" value="CPSGATASE"/>
</dbReference>
<dbReference type="PRINTS" id="PR00096">
    <property type="entry name" value="GATASE"/>
</dbReference>
<dbReference type="SUPFAM" id="SSF52402">
    <property type="entry name" value="Adenine nucleotide alpha hydrolases-like"/>
    <property type="match status" value="1"/>
</dbReference>
<dbReference type="SUPFAM" id="SSF52317">
    <property type="entry name" value="Class I glutamine amidotransferase-like"/>
    <property type="match status" value="1"/>
</dbReference>
<dbReference type="PROSITE" id="PS51273">
    <property type="entry name" value="GATASE_TYPE_1"/>
    <property type="match status" value="1"/>
</dbReference>
<dbReference type="PROSITE" id="PS51553">
    <property type="entry name" value="GMPS_ATP_PPASE"/>
    <property type="match status" value="1"/>
</dbReference>
<reference key="1">
    <citation type="submission" date="2005-09" db="EMBL/GenBank/DDBJ databases">
        <title>Complete genome sequence of Clostridium kluyveri and comparative genomics of Clostridia species.</title>
        <authorList>
            <person name="Inui M."/>
            <person name="Nonaka H."/>
            <person name="Shinoda Y."/>
            <person name="Ikenaga Y."/>
            <person name="Abe M."/>
            <person name="Naito K."/>
            <person name="Vertes A.A."/>
            <person name="Yukawa H."/>
        </authorList>
    </citation>
    <scope>NUCLEOTIDE SEQUENCE [LARGE SCALE GENOMIC DNA]</scope>
    <source>
        <strain>NBRC 12016</strain>
    </source>
</reference>
<comment type="function">
    <text evidence="1">Catalyzes the synthesis of GMP from XMP.</text>
</comment>
<comment type="catalytic activity">
    <reaction evidence="1">
        <text>XMP + L-glutamine + ATP + H2O = GMP + L-glutamate + AMP + diphosphate + 2 H(+)</text>
        <dbReference type="Rhea" id="RHEA:11680"/>
        <dbReference type="ChEBI" id="CHEBI:15377"/>
        <dbReference type="ChEBI" id="CHEBI:15378"/>
        <dbReference type="ChEBI" id="CHEBI:29985"/>
        <dbReference type="ChEBI" id="CHEBI:30616"/>
        <dbReference type="ChEBI" id="CHEBI:33019"/>
        <dbReference type="ChEBI" id="CHEBI:57464"/>
        <dbReference type="ChEBI" id="CHEBI:58115"/>
        <dbReference type="ChEBI" id="CHEBI:58359"/>
        <dbReference type="ChEBI" id="CHEBI:456215"/>
        <dbReference type="EC" id="6.3.5.2"/>
    </reaction>
</comment>
<comment type="pathway">
    <text evidence="1">Purine metabolism; GMP biosynthesis; GMP from XMP (L-Gln route): step 1/1.</text>
</comment>
<comment type="subunit">
    <text evidence="1">Homodimer.</text>
</comment>
<gene>
    <name evidence="1" type="primary">guaA</name>
    <name type="ordered locus">CKR_0411</name>
</gene>